<accession>P0C7S9</accession>
<accession>O74687</accession>
<accession>Q4WIP0</accession>
<gene>
    <name type="primary">gel1</name>
    <name type="synonym">bgt2</name>
    <name type="ORF">AFUA_2G01170</name>
</gene>
<sequence>MKASAVTAALAVGASTVLAAPSIKARDDVTPITVKGNAFFKGAERFYIRGVDYQPGGSSDLADPIADADGCKRDIAKFKELGLNTIRVYSVDNSKNHDECMNALADAGIYLVLDVNTPKYSINRAKPKESYNDVYLQYIFATVDAFAGYKNTLAFFSGNEVINDGPSSSAAPYVKAVTRDLRQYIRSRKYREIPVGYSAADIDTNRLQMAQYMNCGSDDERSDFFAFNDYSWCDPSSFKTSGWDQKVKNFTGYGLPLFLSEYGCNTNKRQFQEVSSLYSTDMTGVYSGGLVYEYSQEASNYGLVEISGNNVKELPDFDALKTAFEKTSNPSGDGNYNKTGGANPCPAKDAPNWDVDNDALPAIPEPAKKYMTEGAGKGPGFAGPGSQDRGTQSTATAEPGSGSATGSSSSGTSTSSKGAAAGLTVPSLTMAPVVVGAVTLLSTVFGAGLVLL</sequence>
<reference key="1">
    <citation type="journal article" date="2005" name="Nature">
        <title>Genomic sequence of the pathogenic and allergenic filamentous fungus Aspergillus fumigatus.</title>
        <authorList>
            <person name="Nierman W.C."/>
            <person name="Pain A."/>
            <person name="Anderson M.J."/>
            <person name="Wortman J.R."/>
            <person name="Kim H.S."/>
            <person name="Arroyo J."/>
            <person name="Berriman M."/>
            <person name="Abe K."/>
            <person name="Archer D.B."/>
            <person name="Bermejo C."/>
            <person name="Bennett J.W."/>
            <person name="Bowyer P."/>
            <person name="Chen D."/>
            <person name="Collins M."/>
            <person name="Coulsen R."/>
            <person name="Davies R."/>
            <person name="Dyer P.S."/>
            <person name="Farman M.L."/>
            <person name="Fedorova N."/>
            <person name="Fedorova N.D."/>
            <person name="Feldblyum T.V."/>
            <person name="Fischer R."/>
            <person name="Fosker N."/>
            <person name="Fraser A."/>
            <person name="Garcia J.L."/>
            <person name="Garcia M.J."/>
            <person name="Goble A."/>
            <person name="Goldman G.H."/>
            <person name="Gomi K."/>
            <person name="Griffith-Jones S."/>
            <person name="Gwilliam R."/>
            <person name="Haas B.J."/>
            <person name="Haas H."/>
            <person name="Harris D.E."/>
            <person name="Horiuchi H."/>
            <person name="Huang J."/>
            <person name="Humphray S."/>
            <person name="Jimenez J."/>
            <person name="Keller N."/>
            <person name="Khouri H."/>
            <person name="Kitamoto K."/>
            <person name="Kobayashi T."/>
            <person name="Konzack S."/>
            <person name="Kulkarni R."/>
            <person name="Kumagai T."/>
            <person name="Lafton A."/>
            <person name="Latge J.-P."/>
            <person name="Li W."/>
            <person name="Lord A."/>
            <person name="Lu C."/>
            <person name="Majoros W.H."/>
            <person name="May G.S."/>
            <person name="Miller B.L."/>
            <person name="Mohamoud Y."/>
            <person name="Molina M."/>
            <person name="Monod M."/>
            <person name="Mouyna I."/>
            <person name="Mulligan S."/>
            <person name="Murphy L.D."/>
            <person name="O'Neil S."/>
            <person name="Paulsen I."/>
            <person name="Penalva M.A."/>
            <person name="Pertea M."/>
            <person name="Price C."/>
            <person name="Pritchard B.L."/>
            <person name="Quail M.A."/>
            <person name="Rabbinowitsch E."/>
            <person name="Rawlins N."/>
            <person name="Rajandream M.A."/>
            <person name="Reichard U."/>
            <person name="Renauld H."/>
            <person name="Robson G.D."/>
            <person name="Rodriguez de Cordoba S."/>
            <person name="Rodriguez-Pena J.M."/>
            <person name="Ronning C.M."/>
            <person name="Rutter S."/>
            <person name="Salzberg S.L."/>
            <person name="Sanchez M."/>
            <person name="Sanchez-Ferrero J.C."/>
            <person name="Saunders D."/>
            <person name="Seeger K."/>
            <person name="Squares R."/>
            <person name="Squares S."/>
            <person name="Takeuchi M."/>
            <person name="Tekaia F."/>
            <person name="Turner G."/>
            <person name="Vazquez de Aldana C.R."/>
            <person name="Weidman J."/>
            <person name="White O."/>
            <person name="Woodward J.R."/>
            <person name="Yu J.-H."/>
            <person name="Fraser C.M."/>
            <person name="Galagan J.E."/>
            <person name="Asai K."/>
            <person name="Machida M."/>
            <person name="Hall N."/>
            <person name="Barrell B.G."/>
            <person name="Denning D.W."/>
        </authorList>
    </citation>
    <scope>NUCLEOTIDE SEQUENCE [LARGE SCALE GENOMIC DNA]</scope>
    <source>
        <strain>ATCC MYA-4609 / CBS 101355 / FGSC A1100 / Af293</strain>
    </source>
</reference>
<proteinExistence type="inferred from homology"/>
<dbReference type="EC" id="2.4.1.-"/>
<dbReference type="EMBL" id="AAHF01000008">
    <property type="protein sequence ID" value="EAL87215.1"/>
    <property type="molecule type" value="Genomic_DNA"/>
</dbReference>
<dbReference type="RefSeq" id="XP_749253.1">
    <property type="nucleotide sequence ID" value="XM_744160.1"/>
</dbReference>
<dbReference type="SMR" id="P0C7S9"/>
<dbReference type="FunCoup" id="P0C7S9">
    <property type="interactions" value="19"/>
</dbReference>
<dbReference type="STRING" id="330879.P0C7S9"/>
<dbReference type="CAZy" id="GH72">
    <property type="family name" value="Glycoside Hydrolase Family 72"/>
</dbReference>
<dbReference type="GlyCosmos" id="P0C7S9">
    <property type="glycosylation" value="2 sites, No reported glycans"/>
</dbReference>
<dbReference type="EnsemblFungi" id="EAL87215">
    <property type="protein sequence ID" value="EAL87215"/>
    <property type="gene ID" value="AFUA_2G01170"/>
</dbReference>
<dbReference type="GeneID" id="3506970"/>
<dbReference type="KEGG" id="afm:AFUA_2G01170"/>
<dbReference type="VEuPathDB" id="FungiDB:Afu2g01170"/>
<dbReference type="eggNOG" id="ENOG502QRZZ">
    <property type="taxonomic scope" value="Eukaryota"/>
</dbReference>
<dbReference type="HOGENOM" id="CLU_021855_1_0_1"/>
<dbReference type="InParanoid" id="P0C7S9"/>
<dbReference type="OMA" id="GVNDYSW"/>
<dbReference type="OrthoDB" id="421038at2759"/>
<dbReference type="Proteomes" id="UP000002530">
    <property type="component" value="Chromosome 2"/>
</dbReference>
<dbReference type="GO" id="GO:0009277">
    <property type="term" value="C:fungal-type cell wall"/>
    <property type="evidence" value="ECO:0000314"/>
    <property type="project" value="AspGD"/>
</dbReference>
<dbReference type="GO" id="GO:0005886">
    <property type="term" value="C:plasma membrane"/>
    <property type="evidence" value="ECO:0000314"/>
    <property type="project" value="AspGD"/>
</dbReference>
<dbReference type="GO" id="GO:0098552">
    <property type="term" value="C:side of membrane"/>
    <property type="evidence" value="ECO:0007669"/>
    <property type="project" value="UniProtKB-KW"/>
</dbReference>
<dbReference type="GO" id="GO:0042124">
    <property type="term" value="F:1,3-beta-glucanosyltransferase activity"/>
    <property type="evidence" value="ECO:0000314"/>
    <property type="project" value="AspGD"/>
</dbReference>
<dbReference type="GO" id="GO:0042123">
    <property type="term" value="F:glucanosyltransferase activity"/>
    <property type="evidence" value="ECO:0000314"/>
    <property type="project" value="AspGD"/>
</dbReference>
<dbReference type="GO" id="GO:0071970">
    <property type="term" value="P:fungal-type cell wall (1-&gt;3)-beta-D-glucan biosynthetic process"/>
    <property type="evidence" value="ECO:0000318"/>
    <property type="project" value="GO_Central"/>
</dbReference>
<dbReference type="GO" id="GO:0031505">
    <property type="term" value="P:fungal-type cell wall organization"/>
    <property type="evidence" value="ECO:0000247"/>
    <property type="project" value="AspGD"/>
</dbReference>
<dbReference type="FunFam" id="3.20.20.80:FF:000032">
    <property type="entry name" value="1,3-beta-glucanosyltransferase"/>
    <property type="match status" value="1"/>
</dbReference>
<dbReference type="Gene3D" id="3.20.20.80">
    <property type="entry name" value="Glycosidases"/>
    <property type="match status" value="1"/>
</dbReference>
<dbReference type="InterPro" id="IPR004886">
    <property type="entry name" value="Glucanosyltransferase"/>
</dbReference>
<dbReference type="InterPro" id="IPR017853">
    <property type="entry name" value="Glycoside_hydrolase_SF"/>
</dbReference>
<dbReference type="PANTHER" id="PTHR31468">
    <property type="entry name" value="1,3-BETA-GLUCANOSYLTRANSFERASE GAS1"/>
    <property type="match status" value="1"/>
</dbReference>
<dbReference type="PANTHER" id="PTHR31468:SF5">
    <property type="entry name" value="1,3-BETA-GLUCANOSYLTRANSFERASE GAS5"/>
    <property type="match status" value="1"/>
</dbReference>
<dbReference type="Pfam" id="PF03198">
    <property type="entry name" value="Glyco_hydro_72"/>
    <property type="match status" value="1"/>
</dbReference>
<dbReference type="SUPFAM" id="SSF51445">
    <property type="entry name" value="(Trans)glycosidases"/>
    <property type="match status" value="1"/>
</dbReference>
<evidence type="ECO:0000250" key="1"/>
<evidence type="ECO:0000250" key="2">
    <source>
        <dbReference type="UniProtKB" id="Q06135"/>
    </source>
</evidence>
<evidence type="ECO:0000255" key="3"/>
<evidence type="ECO:0000256" key="4">
    <source>
        <dbReference type="SAM" id="MobiDB-lite"/>
    </source>
</evidence>
<evidence type="ECO:0000305" key="5"/>
<protein>
    <recommendedName>
        <fullName>1,3-beta-glucanosyltransferase gel1</fullName>
        <ecNumber>2.4.1.-</ecNumber>
    </recommendedName>
    <alternativeName>
        <fullName>Glucan elongating glucanosyltransferase 1</fullName>
    </alternativeName>
</protein>
<comment type="function">
    <text evidence="1">Splits internally a 1,3-beta-glucan molecule and transfers the newly generated reducing end (the donor) to the non-reducing end of another 1,3-beta-glucan molecule (the acceptor) forming a 1,3-beta linkage, resulting in the elongation of 1,3-beta-glucan chains in the cell wall. Involved in cell wall morphogenesis (By similarity).</text>
</comment>
<comment type="subcellular location">
    <subcellularLocation>
        <location evidence="1">Cell membrane</location>
        <topology evidence="1">Lipid-anchor</topology>
        <topology evidence="1">GPI-anchor</topology>
    </subcellularLocation>
</comment>
<comment type="PTM">
    <text evidence="1">The GPI-like anchor contains a phosphoceramide lipid group.</text>
</comment>
<comment type="similarity">
    <text evidence="5">Belongs to the glycosyl hydrolase 72 family.</text>
</comment>
<name>GEL1_ASPFU</name>
<organism>
    <name type="scientific">Aspergillus fumigatus (strain ATCC MYA-4609 / CBS 101355 / FGSC A1100 / Af293)</name>
    <name type="common">Neosartorya fumigata</name>
    <dbReference type="NCBI Taxonomy" id="330879"/>
    <lineage>
        <taxon>Eukaryota</taxon>
        <taxon>Fungi</taxon>
        <taxon>Dikarya</taxon>
        <taxon>Ascomycota</taxon>
        <taxon>Pezizomycotina</taxon>
        <taxon>Eurotiomycetes</taxon>
        <taxon>Eurotiomycetidae</taxon>
        <taxon>Eurotiales</taxon>
        <taxon>Aspergillaceae</taxon>
        <taxon>Aspergillus</taxon>
        <taxon>Aspergillus subgen. Fumigati</taxon>
    </lineage>
</organism>
<keyword id="KW-1003">Cell membrane</keyword>
<keyword id="KW-1015">Disulfide bond</keyword>
<keyword id="KW-0325">Glycoprotein</keyword>
<keyword id="KW-0336">GPI-anchor</keyword>
<keyword id="KW-0449">Lipoprotein</keyword>
<keyword id="KW-0472">Membrane</keyword>
<keyword id="KW-1185">Reference proteome</keyword>
<keyword id="KW-0732">Signal</keyword>
<keyword id="KW-0808">Transferase</keyword>
<feature type="signal peptide" evidence="1">
    <location>
        <begin position="1"/>
        <end position="19"/>
    </location>
</feature>
<feature type="chain" id="PRO_0000245547" description="1,3-beta-glucanosyltransferase gel1">
    <location>
        <begin position="20"/>
        <end position="419"/>
    </location>
</feature>
<feature type="propeptide" id="PRO_0000245548" description="Removed in mature form" evidence="3">
    <location>
        <begin position="420"/>
        <end position="452"/>
    </location>
</feature>
<feature type="region of interest" description="Disordered" evidence="4">
    <location>
        <begin position="325"/>
        <end position="419"/>
    </location>
</feature>
<feature type="compositionally biased region" description="Polar residues" evidence="4">
    <location>
        <begin position="325"/>
        <end position="340"/>
    </location>
</feature>
<feature type="compositionally biased region" description="Low complexity" evidence="4">
    <location>
        <begin position="393"/>
        <end position="419"/>
    </location>
</feature>
<feature type="active site" description="Proton donor" evidence="1">
    <location>
        <position position="160"/>
    </location>
</feature>
<feature type="active site" description="Nucleophile" evidence="1">
    <location>
        <position position="261"/>
    </location>
</feature>
<feature type="binding site" evidence="2">
    <location>
        <position position="89"/>
    </location>
    <ligand>
        <name>(1,3-beta-D-glucosyl)n</name>
        <dbReference type="ChEBI" id="CHEBI:37671"/>
        <label>1</label>
        <note>donor substrate</note>
    </ligand>
</feature>
<feature type="binding site" evidence="2">
    <location>
        <position position="159"/>
    </location>
    <ligand>
        <name>(1,3-beta-D-glucosyl)n</name>
        <dbReference type="ChEBI" id="CHEBI:37671"/>
        <label>1</label>
        <note>donor substrate</note>
    </ligand>
</feature>
<feature type="binding site" evidence="2">
    <location>
        <position position="160"/>
    </location>
    <ligand>
        <name>(1,3-beta-D-glucosyl)n</name>
        <dbReference type="ChEBI" id="CHEBI:37671"/>
        <label>2</label>
        <note>acceptor substrate</note>
    </ligand>
</feature>
<feature type="binding site" evidence="2">
    <location>
        <position position="201"/>
    </location>
    <ligand>
        <name>(1,3-beta-D-glucosyl)n</name>
        <dbReference type="ChEBI" id="CHEBI:37671"/>
        <label>2</label>
        <note>acceptor substrate</note>
    </ligand>
</feature>
<feature type="binding site" evidence="2">
    <location>
        <position position="206"/>
    </location>
    <ligand>
        <name>(1,3-beta-D-glucosyl)n</name>
        <dbReference type="ChEBI" id="CHEBI:37671"/>
        <label>2</label>
        <note>acceptor substrate</note>
    </ligand>
</feature>
<feature type="binding site" evidence="2">
    <location>
        <position position="292"/>
    </location>
    <ligand>
        <name>(1,3-beta-D-glucosyl)n</name>
        <dbReference type="ChEBI" id="CHEBI:37671"/>
        <label>1</label>
        <note>donor substrate</note>
    </ligand>
</feature>
<feature type="lipid moiety-binding region" description="GPI-like-anchor amidated alanine" evidence="3">
    <location>
        <position position="419"/>
    </location>
</feature>
<feature type="glycosylation site" description="N-linked (GlcNAc...) asparagine" evidence="3">
    <location>
        <position position="249"/>
    </location>
</feature>
<feature type="glycosylation site" description="N-linked (GlcNAc...) asparagine" evidence="3">
    <location>
        <position position="337"/>
    </location>
</feature>
<feature type="disulfide bond" evidence="2">
    <location>
        <begin position="71"/>
        <end position="100"/>
    </location>
</feature>
<feature type="disulfide bond" evidence="2">
    <location>
        <begin position="215"/>
        <end position="345"/>
    </location>
</feature>
<feature type="disulfide bond" evidence="2">
    <location>
        <begin position="233"/>
        <end position="264"/>
    </location>
</feature>